<organism>
    <name type="scientific">Escherichia coli O157:H7 (strain EC4115 / EHEC)</name>
    <dbReference type="NCBI Taxonomy" id="444450"/>
    <lineage>
        <taxon>Bacteria</taxon>
        <taxon>Pseudomonadati</taxon>
        <taxon>Pseudomonadota</taxon>
        <taxon>Gammaproteobacteria</taxon>
        <taxon>Enterobacterales</taxon>
        <taxon>Enterobacteriaceae</taxon>
        <taxon>Escherichia</taxon>
    </lineage>
</organism>
<comment type="function">
    <text evidence="1">Involved in the modulation of the activity of the glucose-phosphotransferase system (glucose-PTS). Interacts with the transcriptional repressor Mlc, preventing its interaction with DNA and leading to the modulation of expression of genes regulated by Mlc, including ptsG, which encodes the PTS system glucose-specific EIICB component.</text>
</comment>
<comment type="function">
    <text evidence="1">Shows zinc-dependent metallopeptidase activity.</text>
</comment>
<comment type="cofactor">
    <cofactor evidence="1">
        <name>Zn(2+)</name>
        <dbReference type="ChEBI" id="CHEBI:29105"/>
    </cofactor>
    <text evidence="1">Binds 1 zinc ion per subunit.</text>
</comment>
<comment type="subunit">
    <text evidence="1">Interacts with Mlc.</text>
</comment>
<comment type="subcellular location">
    <subcellularLocation>
        <location evidence="1">Cytoplasm</location>
    </subcellularLocation>
</comment>
<comment type="similarity">
    <text evidence="1">Belongs to the MtfA family.</text>
</comment>
<dbReference type="EC" id="3.4.11.-" evidence="1"/>
<dbReference type="EMBL" id="CP001164">
    <property type="protein sequence ID" value="ACI37087.1"/>
    <property type="molecule type" value="Genomic_DNA"/>
</dbReference>
<dbReference type="RefSeq" id="WP_001302302.1">
    <property type="nucleotide sequence ID" value="NC_011353.1"/>
</dbReference>
<dbReference type="SMR" id="B5YSQ7"/>
<dbReference type="MEROPS" id="M90.001"/>
<dbReference type="GeneID" id="75205786"/>
<dbReference type="KEGG" id="ecf:ECH74115_2819"/>
<dbReference type="HOGENOM" id="CLU_063037_2_0_6"/>
<dbReference type="GO" id="GO:0005829">
    <property type="term" value="C:cytosol"/>
    <property type="evidence" value="ECO:0007669"/>
    <property type="project" value="TreeGrafter"/>
</dbReference>
<dbReference type="GO" id="GO:0004177">
    <property type="term" value="F:aminopeptidase activity"/>
    <property type="evidence" value="ECO:0007669"/>
    <property type="project" value="UniProtKB-UniRule"/>
</dbReference>
<dbReference type="GO" id="GO:0008237">
    <property type="term" value="F:metallopeptidase activity"/>
    <property type="evidence" value="ECO:0007669"/>
    <property type="project" value="UniProtKB-UniRule"/>
</dbReference>
<dbReference type="GO" id="GO:0008270">
    <property type="term" value="F:zinc ion binding"/>
    <property type="evidence" value="ECO:0007669"/>
    <property type="project" value="UniProtKB-UniRule"/>
</dbReference>
<dbReference type="GO" id="GO:0006508">
    <property type="term" value="P:proteolysis"/>
    <property type="evidence" value="ECO:0007669"/>
    <property type="project" value="UniProtKB-KW"/>
</dbReference>
<dbReference type="CDD" id="cd20169">
    <property type="entry name" value="Peptidase_M90_mtfA"/>
    <property type="match status" value="1"/>
</dbReference>
<dbReference type="FunFam" id="1.10.472.150:FF:000001">
    <property type="entry name" value="Protein MtfA"/>
    <property type="match status" value="1"/>
</dbReference>
<dbReference type="FunFam" id="3.40.390.10:FF:000012">
    <property type="entry name" value="Protein MtfA"/>
    <property type="match status" value="1"/>
</dbReference>
<dbReference type="Gene3D" id="3.40.390.10">
    <property type="entry name" value="Collagenase (Catalytic Domain)"/>
    <property type="match status" value="1"/>
</dbReference>
<dbReference type="Gene3D" id="1.10.472.150">
    <property type="entry name" value="Glucose-regulated metallo-peptidase M90, N-terminal domain"/>
    <property type="match status" value="1"/>
</dbReference>
<dbReference type="HAMAP" id="MF_01593">
    <property type="entry name" value="MtfA"/>
    <property type="match status" value="1"/>
</dbReference>
<dbReference type="InterPro" id="IPR024079">
    <property type="entry name" value="MetalloPept_cat_dom_sf"/>
</dbReference>
<dbReference type="InterPro" id="IPR057256">
    <property type="entry name" value="MtfA_enterob"/>
</dbReference>
<dbReference type="InterPro" id="IPR010384">
    <property type="entry name" value="MtfA_fam"/>
</dbReference>
<dbReference type="InterPro" id="IPR042252">
    <property type="entry name" value="MtfA_N"/>
</dbReference>
<dbReference type="NCBIfam" id="NF011939">
    <property type="entry name" value="PRK15410.1"/>
    <property type="match status" value="1"/>
</dbReference>
<dbReference type="PANTHER" id="PTHR30164">
    <property type="entry name" value="MTFA PEPTIDASE"/>
    <property type="match status" value="1"/>
</dbReference>
<dbReference type="PANTHER" id="PTHR30164:SF2">
    <property type="entry name" value="PROTEIN MTFA"/>
    <property type="match status" value="1"/>
</dbReference>
<dbReference type="Pfam" id="PF06167">
    <property type="entry name" value="Peptidase_M90"/>
    <property type="match status" value="1"/>
</dbReference>
<dbReference type="SUPFAM" id="SSF55486">
    <property type="entry name" value="Metalloproteases ('zincins'), catalytic domain"/>
    <property type="match status" value="1"/>
</dbReference>
<keyword id="KW-0031">Aminopeptidase</keyword>
<keyword id="KW-0963">Cytoplasm</keyword>
<keyword id="KW-0378">Hydrolase</keyword>
<keyword id="KW-0479">Metal-binding</keyword>
<keyword id="KW-0482">Metalloprotease</keyword>
<keyword id="KW-0645">Protease</keyword>
<keyword id="KW-0862">Zinc</keyword>
<feature type="chain" id="PRO_1000147833" description="Mlc titration factor A">
    <location>
        <begin position="1"/>
        <end position="265"/>
    </location>
</feature>
<feature type="binding site" evidence="1">
    <location>
        <position position="111"/>
    </location>
    <ligand>
        <name>Zn(2+)</name>
        <dbReference type="ChEBI" id="CHEBI:29105"/>
    </ligand>
</feature>
<feature type="binding site" evidence="1">
    <location>
        <position position="148"/>
    </location>
    <ligand>
        <name>Zn(2+)</name>
        <dbReference type="ChEBI" id="CHEBI:29105"/>
    </ligand>
</feature>
<feature type="binding site" evidence="1">
    <location>
        <position position="152"/>
    </location>
    <ligand>
        <name>Zn(2+)</name>
        <dbReference type="ChEBI" id="CHEBI:29105"/>
    </ligand>
</feature>
<feature type="binding site" evidence="1">
    <location>
        <position position="211"/>
    </location>
    <ligand>
        <name>Zn(2+)</name>
        <dbReference type="ChEBI" id="CHEBI:29105"/>
    </ligand>
</feature>
<gene>
    <name evidence="1" type="primary">mtfA</name>
    <name type="ordered locus">ECH74115_2819</name>
</gene>
<proteinExistence type="inferred from homology"/>
<reference key="1">
    <citation type="journal article" date="2011" name="Proc. Natl. Acad. Sci. U.S.A.">
        <title>Genomic anatomy of Escherichia coli O157:H7 outbreaks.</title>
        <authorList>
            <person name="Eppinger M."/>
            <person name="Mammel M.K."/>
            <person name="Leclerc J.E."/>
            <person name="Ravel J."/>
            <person name="Cebula T.A."/>
        </authorList>
    </citation>
    <scope>NUCLEOTIDE SEQUENCE [LARGE SCALE GENOMIC DNA]</scope>
    <source>
        <strain>EC4115 / EHEC</strain>
    </source>
</reference>
<evidence type="ECO:0000255" key="1">
    <source>
        <dbReference type="HAMAP-Rule" id="MF_01593"/>
    </source>
</evidence>
<name>MTFA_ECO5E</name>
<accession>B5YSQ7</accession>
<sequence length="265" mass="30279">MIKWPWKVQESAHQTALPWQEALSIPLLTCLTEQEQSKLVTLAERFLQQKRLVPLQGFELDSLRSCRIALLFCLPVLELGLEWLDGFHEVLIYPAPFVVDDEWEDDIGLVHNQRIVQSGQSWQQGPIVLNWLDIQDSFDASGFNLIIHEVAHKLDTRNGDRASGVPFIPLREVAGWEHDLHAAMNNIQEEIELVGENAASIDAYAASDPAECFAVLSEYFFSAPELFAPRFPSLWQRFCQFYQQDPLQRLHHANDTDSFSATNVH</sequence>
<protein>
    <recommendedName>
        <fullName evidence="1">Mlc titration factor A</fullName>
    </recommendedName>
    <alternativeName>
        <fullName evidence="1">Probable zinc metallopeptidase MtfA</fullName>
        <ecNumber evidence="1">3.4.11.-</ecNumber>
    </alternativeName>
</protein>